<protein>
    <recommendedName>
        <fullName evidence="1">Probable 2-(5''-triphosphoribosyl)-3'-dephosphocoenzyme-A synthase</fullName>
        <shortName evidence="1">2-(5''-triphosphoribosyl)-3'-dephospho-CoA synthase</shortName>
        <ecNumber evidence="1">2.4.2.52</ecNumber>
    </recommendedName>
</protein>
<reference key="1">
    <citation type="journal article" date="2009" name="J. Bacteriol.">
        <title>Genome sequence of Azotobacter vinelandii, an obligate aerobe specialized to support diverse anaerobic metabolic processes.</title>
        <authorList>
            <person name="Setubal J.C."/>
            <person name="Dos Santos P."/>
            <person name="Goldman B.S."/>
            <person name="Ertesvaag H."/>
            <person name="Espin G."/>
            <person name="Rubio L.M."/>
            <person name="Valla S."/>
            <person name="Almeida N.F."/>
            <person name="Balasubramanian D."/>
            <person name="Cromes L."/>
            <person name="Curatti L."/>
            <person name="Du Z."/>
            <person name="Godsy E."/>
            <person name="Goodner B."/>
            <person name="Hellner-Burris K."/>
            <person name="Hernandez J.A."/>
            <person name="Houmiel K."/>
            <person name="Imperial J."/>
            <person name="Kennedy C."/>
            <person name="Larson T.J."/>
            <person name="Latreille P."/>
            <person name="Ligon L.S."/>
            <person name="Lu J."/>
            <person name="Maerk M."/>
            <person name="Miller N.M."/>
            <person name="Norton S."/>
            <person name="O'Carroll I.P."/>
            <person name="Paulsen I."/>
            <person name="Raulfs E.C."/>
            <person name="Roemer R."/>
            <person name="Rosser J."/>
            <person name="Segura D."/>
            <person name="Slater S."/>
            <person name="Stricklin S.L."/>
            <person name="Studholme D.J."/>
            <person name="Sun J."/>
            <person name="Viana C.J."/>
            <person name="Wallin E."/>
            <person name="Wang B."/>
            <person name="Wheeler C."/>
            <person name="Zhu H."/>
            <person name="Dean D.R."/>
            <person name="Dixon R."/>
            <person name="Wood D."/>
        </authorList>
    </citation>
    <scope>NUCLEOTIDE SEQUENCE [LARGE SCALE GENOMIC DNA]</scope>
    <source>
        <strain>DJ / ATCC BAA-1303</strain>
    </source>
</reference>
<gene>
    <name evidence="1" type="primary">mdcB</name>
    <name type="ordered locus">Avin_10290</name>
</gene>
<feature type="chain" id="PRO_1000205872" description="Probable 2-(5''-triphosphoribosyl)-3'-dephosphocoenzyme-A synthase">
    <location>
        <begin position="1"/>
        <end position="292"/>
    </location>
</feature>
<dbReference type="EC" id="2.4.2.52" evidence="1"/>
<dbReference type="EMBL" id="CP001157">
    <property type="protein sequence ID" value="ACO77261.1"/>
    <property type="molecule type" value="Genomic_DNA"/>
</dbReference>
<dbReference type="RefSeq" id="WP_012699684.1">
    <property type="nucleotide sequence ID" value="NC_012560.1"/>
</dbReference>
<dbReference type="STRING" id="322710.Avin_10290"/>
<dbReference type="EnsemblBacteria" id="ACO77261">
    <property type="protein sequence ID" value="ACO77261"/>
    <property type="gene ID" value="Avin_10290"/>
</dbReference>
<dbReference type="GeneID" id="88184377"/>
<dbReference type="KEGG" id="avn:Avin_10290"/>
<dbReference type="eggNOG" id="COG1767">
    <property type="taxonomic scope" value="Bacteria"/>
</dbReference>
<dbReference type="HOGENOM" id="CLU_056179_0_0_6"/>
<dbReference type="OrthoDB" id="114886at2"/>
<dbReference type="Proteomes" id="UP000002424">
    <property type="component" value="Chromosome"/>
</dbReference>
<dbReference type="GO" id="GO:0005524">
    <property type="term" value="F:ATP binding"/>
    <property type="evidence" value="ECO:0007669"/>
    <property type="project" value="UniProtKB-KW"/>
</dbReference>
<dbReference type="GO" id="GO:0046917">
    <property type="term" value="F:triphosphoribosyl-dephospho-CoA synthase activity"/>
    <property type="evidence" value="ECO:0007669"/>
    <property type="project" value="UniProtKB-UniRule"/>
</dbReference>
<dbReference type="GO" id="GO:0051191">
    <property type="term" value="P:prosthetic group biosynthetic process"/>
    <property type="evidence" value="ECO:0007669"/>
    <property type="project" value="TreeGrafter"/>
</dbReference>
<dbReference type="Gene3D" id="1.10.4200.10">
    <property type="entry name" value="Triphosphoribosyl-dephospho-CoA protein"/>
    <property type="match status" value="2"/>
</dbReference>
<dbReference type="HAMAP" id="MF_01883">
    <property type="entry name" value="MdcB"/>
    <property type="match status" value="1"/>
</dbReference>
<dbReference type="InterPro" id="IPR002736">
    <property type="entry name" value="CitG"/>
</dbReference>
<dbReference type="InterPro" id="IPR017555">
    <property type="entry name" value="TriPribosyl-deP-CoA_syn"/>
</dbReference>
<dbReference type="NCBIfam" id="TIGR03132">
    <property type="entry name" value="malonate_mdcB"/>
    <property type="match status" value="1"/>
</dbReference>
<dbReference type="NCBIfam" id="NF002315">
    <property type="entry name" value="PRK01237.1"/>
    <property type="match status" value="1"/>
</dbReference>
<dbReference type="PANTHER" id="PTHR30201:SF2">
    <property type="entry name" value="2-(5''-TRIPHOSPHORIBOSYL)-3'-DEPHOSPHOCOENZYME-A SYNTHASE"/>
    <property type="match status" value="1"/>
</dbReference>
<dbReference type="PANTHER" id="PTHR30201">
    <property type="entry name" value="TRIPHOSPHORIBOSYL-DEPHOSPHO-COA SYNTHASE"/>
    <property type="match status" value="1"/>
</dbReference>
<dbReference type="Pfam" id="PF01874">
    <property type="entry name" value="CitG"/>
    <property type="match status" value="1"/>
</dbReference>
<name>MDCB_AZOVD</name>
<proteinExistence type="inferred from homology"/>
<sequence>MSAFIATIPRPSLAERFADLAVGALIDEAELSPKPALVDRRGSGAHRDLDLKLMHASARALWPAFHAMAEAARSLAELDRPLRETIGRLGREGEARMLAVTGGVNTHRGAIWALGLLVTAAALEPQRLAPEQVSLRAARLARLEDRQMPAQPPSHGERVRQRYGVRGAREEARGGFPGVIRHGLPQLRRSRAAGCDENHARLDALLAIMAQLEDTCVLHRAGLEGLRCMQDGARAVLVAGGSASLAGRRSLRDLELGLLELNASPGGAADLLAVTLFLDRLEPMLGAPIGSL</sequence>
<evidence type="ECO:0000255" key="1">
    <source>
        <dbReference type="HAMAP-Rule" id="MF_01883"/>
    </source>
</evidence>
<organism>
    <name type="scientific">Azotobacter vinelandii (strain DJ / ATCC BAA-1303)</name>
    <dbReference type="NCBI Taxonomy" id="322710"/>
    <lineage>
        <taxon>Bacteria</taxon>
        <taxon>Pseudomonadati</taxon>
        <taxon>Pseudomonadota</taxon>
        <taxon>Gammaproteobacteria</taxon>
        <taxon>Pseudomonadales</taxon>
        <taxon>Pseudomonadaceae</taxon>
        <taxon>Azotobacter</taxon>
    </lineage>
</organism>
<keyword id="KW-0067">ATP-binding</keyword>
<keyword id="KW-0547">Nucleotide-binding</keyword>
<keyword id="KW-0808">Transferase</keyword>
<accession>C1DNP5</accession>
<comment type="function">
    <text evidence="1">Involved in the formation of 2-(5''-phosphoribosyl)-3'-dephosphocoenzyme-A, the prosthetic group of the acyl-carrier protein of the malonate decarboxylase.</text>
</comment>
<comment type="catalytic activity">
    <reaction evidence="1">
        <text>3'-dephospho-CoA + ATP = 2'-(5''-triphospho-alpha-D-ribosyl)-3'-dephospho-CoA + adenine</text>
        <dbReference type="Rhea" id="RHEA:15117"/>
        <dbReference type="ChEBI" id="CHEBI:16708"/>
        <dbReference type="ChEBI" id="CHEBI:30616"/>
        <dbReference type="ChEBI" id="CHEBI:57328"/>
        <dbReference type="ChEBI" id="CHEBI:61378"/>
        <dbReference type="EC" id="2.4.2.52"/>
    </reaction>
</comment>
<comment type="similarity">
    <text evidence="1">Belongs to the CitG/MdcB family.</text>
</comment>